<dbReference type="EMBL" id="AE005174">
    <property type="protein sequence ID" value="AAG59444.1"/>
    <property type="molecule type" value="Genomic_DNA"/>
</dbReference>
<dbReference type="EMBL" id="BA000007">
    <property type="protein sequence ID" value="BAB38646.1"/>
    <property type="molecule type" value="Genomic_DNA"/>
</dbReference>
<dbReference type="PIR" id="G91281">
    <property type="entry name" value="G91281"/>
</dbReference>
<dbReference type="PIR" id="H86122">
    <property type="entry name" value="H86122"/>
</dbReference>
<dbReference type="RefSeq" id="NP_313250.1">
    <property type="nucleotide sequence ID" value="NC_002695.1"/>
</dbReference>
<dbReference type="RefSeq" id="WP_001296693.1">
    <property type="nucleotide sequence ID" value="NZ_VOAI01000023.1"/>
</dbReference>
<dbReference type="STRING" id="155864.Z5857"/>
<dbReference type="GeneID" id="93777578"/>
<dbReference type="KEGG" id="ece:Z5857"/>
<dbReference type="KEGG" id="ecs:ECs_5224"/>
<dbReference type="PATRIC" id="fig|83334.175.peg.5785"/>
<dbReference type="HOGENOM" id="CLU_213745_0_0_6"/>
<dbReference type="Proteomes" id="UP000000558">
    <property type="component" value="Chromosome"/>
</dbReference>
<dbReference type="Proteomes" id="UP000002519">
    <property type="component" value="Chromosome"/>
</dbReference>
<dbReference type="GO" id="GO:0019856">
    <property type="term" value="P:pyrimidine nucleobase biosynthetic process"/>
    <property type="evidence" value="ECO:0007669"/>
    <property type="project" value="InterPro"/>
</dbReference>
<dbReference type="GO" id="GO:0006221">
    <property type="term" value="P:pyrimidine nucleotide biosynthetic process"/>
    <property type="evidence" value="ECO:0007669"/>
    <property type="project" value="UniProtKB-KW"/>
</dbReference>
<dbReference type="InterPro" id="IPR012602">
    <property type="entry name" value="PyrBI_leader"/>
</dbReference>
<dbReference type="NCBIfam" id="NF007587">
    <property type="entry name" value="PRK10224.1"/>
    <property type="match status" value="1"/>
</dbReference>
<dbReference type="Pfam" id="PF08052">
    <property type="entry name" value="PyrBI_leader"/>
    <property type="match status" value="1"/>
</dbReference>
<dbReference type="PIRSF" id="PIRSF003249">
    <property type="entry name" value="PyrBI_leader"/>
    <property type="match status" value="1"/>
</dbReference>
<proteinExistence type="predicted"/>
<accession>P0AD85</accession>
<accession>P09150</accession>
<keyword id="KW-0428">Leader peptide</keyword>
<keyword id="KW-0665">Pyrimidine biosynthesis</keyword>
<keyword id="KW-1185">Reference proteome</keyword>
<organism>
    <name type="scientific">Escherichia coli O157:H7</name>
    <dbReference type="NCBI Taxonomy" id="83334"/>
    <lineage>
        <taxon>Bacteria</taxon>
        <taxon>Pseudomonadati</taxon>
        <taxon>Pseudomonadota</taxon>
        <taxon>Gammaproteobacteria</taxon>
        <taxon>Enterobacterales</taxon>
        <taxon>Enterobacteriaceae</taxon>
        <taxon>Escherichia</taxon>
    </lineage>
</organism>
<protein>
    <recommendedName>
        <fullName>pyr operon leader peptide</fullName>
    </recommendedName>
    <alternativeName>
        <fullName>pyrBI operon attenuator</fullName>
    </alternativeName>
</protein>
<reference key="1">
    <citation type="journal article" date="2001" name="Nature">
        <title>Genome sequence of enterohaemorrhagic Escherichia coli O157:H7.</title>
        <authorList>
            <person name="Perna N.T."/>
            <person name="Plunkett G. III"/>
            <person name="Burland V."/>
            <person name="Mau B."/>
            <person name="Glasner J.D."/>
            <person name="Rose D.J."/>
            <person name="Mayhew G.F."/>
            <person name="Evans P.S."/>
            <person name="Gregor J."/>
            <person name="Kirkpatrick H.A."/>
            <person name="Posfai G."/>
            <person name="Hackett J."/>
            <person name="Klink S."/>
            <person name="Boutin A."/>
            <person name="Shao Y."/>
            <person name="Miller L."/>
            <person name="Grotbeck E.J."/>
            <person name="Davis N.W."/>
            <person name="Lim A."/>
            <person name="Dimalanta E.T."/>
            <person name="Potamousis K."/>
            <person name="Apodaca J."/>
            <person name="Anantharaman T.S."/>
            <person name="Lin J."/>
            <person name="Yen G."/>
            <person name="Schwartz D.C."/>
            <person name="Welch R.A."/>
            <person name="Blattner F.R."/>
        </authorList>
    </citation>
    <scope>NUCLEOTIDE SEQUENCE [LARGE SCALE GENOMIC DNA]</scope>
    <source>
        <strain>O157:H7 / EDL933 / ATCC 700927 / EHEC</strain>
    </source>
</reference>
<reference key="2">
    <citation type="journal article" date="2001" name="DNA Res.">
        <title>Complete genome sequence of enterohemorrhagic Escherichia coli O157:H7 and genomic comparison with a laboratory strain K-12.</title>
        <authorList>
            <person name="Hayashi T."/>
            <person name="Makino K."/>
            <person name="Ohnishi M."/>
            <person name="Kurokawa K."/>
            <person name="Ishii K."/>
            <person name="Yokoyama K."/>
            <person name="Han C.-G."/>
            <person name="Ohtsubo E."/>
            <person name="Nakayama K."/>
            <person name="Murata T."/>
            <person name="Tanaka M."/>
            <person name="Tobe T."/>
            <person name="Iida T."/>
            <person name="Takami H."/>
            <person name="Honda T."/>
            <person name="Sasakawa C."/>
            <person name="Ogasawara N."/>
            <person name="Yasunaga T."/>
            <person name="Kuhara S."/>
            <person name="Shiba T."/>
            <person name="Hattori M."/>
            <person name="Shinagawa H."/>
        </authorList>
    </citation>
    <scope>NUCLEOTIDE SEQUENCE [LARGE SCALE GENOMIC DNA]</scope>
    <source>
        <strain>O157:H7 / Sakai / RIMD 0509952 / EHEC</strain>
    </source>
</reference>
<gene>
    <name type="primary">pyrL</name>
    <name type="ordered locus">Z5857</name>
    <name type="ordered locus">ECs5224</name>
</gene>
<sequence length="44" mass="5098">MVQCVRHFVLPRLKKDAGLPFFFPLITHSQPLNRGAFFCPGVRR</sequence>
<feature type="chain" id="PRO_0000196522" description="pyr operon leader peptide">
    <location>
        <begin position="1"/>
        <end position="44"/>
    </location>
</feature>
<name>LPPY_ECO57</name>